<organism>
    <name type="scientific">Homo sapiens</name>
    <name type="common">Human</name>
    <dbReference type="NCBI Taxonomy" id="9606"/>
    <lineage>
        <taxon>Eukaryota</taxon>
        <taxon>Metazoa</taxon>
        <taxon>Chordata</taxon>
        <taxon>Craniata</taxon>
        <taxon>Vertebrata</taxon>
        <taxon>Euteleostomi</taxon>
        <taxon>Mammalia</taxon>
        <taxon>Eutheria</taxon>
        <taxon>Euarchontoglires</taxon>
        <taxon>Primates</taxon>
        <taxon>Haplorrhini</taxon>
        <taxon>Catarrhini</taxon>
        <taxon>Hominidae</taxon>
        <taxon>Homo</taxon>
    </lineage>
</organism>
<proteinExistence type="evidence at protein level"/>
<feature type="signal peptide" evidence="1">
    <location>
        <begin position="1"/>
        <end position="22"/>
    </location>
</feature>
<feature type="chain" id="PRO_0000027939" description="Kallikrein-5">
    <location>
        <begin position="23"/>
        <end position="293"/>
    </location>
</feature>
<feature type="domain" description="Peptidase S1" evidence="2">
    <location>
        <begin position="67"/>
        <end position="290"/>
    </location>
</feature>
<feature type="region of interest" description="Disordered" evidence="3">
    <location>
        <begin position="37"/>
        <end position="68"/>
    </location>
</feature>
<feature type="compositionally biased region" description="Polar residues" evidence="3">
    <location>
        <begin position="37"/>
        <end position="49"/>
    </location>
</feature>
<feature type="active site" description="Charge relay system" evidence="4">
    <location>
        <position position="108"/>
    </location>
</feature>
<feature type="active site" description="Charge relay system" evidence="4">
    <location>
        <position position="153"/>
    </location>
</feature>
<feature type="active site" description="Charge relay system" evidence="4">
    <location>
        <position position="245"/>
    </location>
</feature>
<feature type="site" description="Major binding site for inhibitory zinc">
    <location>
        <position position="150"/>
    </location>
</feature>
<feature type="glycosylation site" description="N-linked (GlcNAc...) asparagine" evidence="1">
    <location>
        <position position="69"/>
    </location>
</feature>
<feature type="glycosylation site" description="N-linked (GlcNAc...) asparagine" evidence="1">
    <location>
        <position position="173"/>
    </location>
</feature>
<feature type="glycosylation site" description="N-linked (GlcNAc...) asparagine" evidence="4">
    <location>
        <position position="208"/>
    </location>
</feature>
<feature type="glycosylation site" description="N-linked (GlcNAc...) asparagine" evidence="1">
    <location>
        <position position="252"/>
    </location>
</feature>
<feature type="disulfide bond" evidence="2 4">
    <location>
        <begin position="73"/>
        <end position="206"/>
    </location>
</feature>
<feature type="disulfide bond" evidence="2 4">
    <location>
        <begin position="93"/>
        <end position="109"/>
    </location>
</feature>
<feature type="disulfide bond" evidence="2 4">
    <location>
        <begin position="178"/>
        <end position="279"/>
    </location>
</feature>
<feature type="disulfide bond" evidence="2 4">
    <location>
        <begin position="185"/>
        <end position="251"/>
    </location>
</feature>
<feature type="disulfide bond" evidence="2 4">
    <location>
        <begin position="217"/>
        <end position="231"/>
    </location>
</feature>
<feature type="disulfide bond" evidence="2 4">
    <location>
        <begin position="241"/>
        <end position="266"/>
    </location>
</feature>
<feature type="sequence variant" id="VAR_051853" description="In dbSNP:rs2232532.">
    <original>G</original>
    <variation>R</variation>
    <location>
        <position position="55"/>
    </location>
</feature>
<feature type="sequence variant" id="VAR_051854" description="In dbSNP:rs183854.">
    <original>D</original>
    <variation>N</variation>
    <location>
        <position position="153"/>
    </location>
</feature>
<feature type="strand" evidence="10">
    <location>
        <begin position="81"/>
        <end position="86"/>
    </location>
</feature>
<feature type="turn" evidence="10">
    <location>
        <begin position="87"/>
        <end position="89"/>
    </location>
</feature>
<feature type="strand" evidence="10">
    <location>
        <begin position="90"/>
        <end position="99"/>
    </location>
</feature>
<feature type="strand" evidence="10">
    <location>
        <begin position="102"/>
        <end position="105"/>
    </location>
</feature>
<feature type="helix" evidence="9">
    <location>
        <begin position="107"/>
        <end position="109"/>
    </location>
</feature>
<feature type="strand" evidence="10">
    <location>
        <begin position="114"/>
        <end position="119"/>
    </location>
</feature>
<feature type="strand" evidence="10">
    <location>
        <begin position="122"/>
        <end position="124"/>
    </location>
</feature>
<feature type="strand" evidence="10">
    <location>
        <begin position="132"/>
        <end position="134"/>
    </location>
</feature>
<feature type="strand" evidence="10">
    <location>
        <begin position="136"/>
        <end position="141"/>
    </location>
</feature>
<feature type="strand" evidence="9">
    <location>
        <begin position="147"/>
        <end position="149"/>
    </location>
</feature>
<feature type="strand" evidence="10">
    <location>
        <begin position="155"/>
        <end position="161"/>
    </location>
</feature>
<feature type="strand" evidence="10">
    <location>
        <begin position="167"/>
        <end position="169"/>
    </location>
</feature>
<feature type="strand" evidence="10">
    <location>
        <begin position="184"/>
        <end position="191"/>
    </location>
</feature>
<feature type="strand" evidence="10">
    <location>
        <begin position="193"/>
        <end position="197"/>
    </location>
</feature>
<feature type="strand" evidence="10">
    <location>
        <begin position="205"/>
        <end position="211"/>
    </location>
</feature>
<feature type="helix" evidence="10">
    <location>
        <begin position="214"/>
        <end position="220"/>
    </location>
</feature>
<feature type="turn" evidence="10">
    <location>
        <begin position="222"/>
        <end position="224"/>
    </location>
</feature>
<feature type="strand" evidence="10">
    <location>
        <begin position="229"/>
        <end position="232"/>
    </location>
</feature>
<feature type="strand" evidence="10">
    <location>
        <begin position="248"/>
        <end position="251"/>
    </location>
</feature>
<feature type="strand" evidence="10">
    <location>
        <begin position="254"/>
        <end position="261"/>
    </location>
</feature>
<feature type="strand" evidence="10">
    <location>
        <begin position="273"/>
        <end position="277"/>
    </location>
</feature>
<feature type="helix" evidence="10">
    <location>
        <begin position="278"/>
        <end position="281"/>
    </location>
</feature>
<feature type="helix" evidence="10">
    <location>
        <begin position="282"/>
        <end position="291"/>
    </location>
</feature>
<comment type="function">
    <text>May be involved in desquamation.</text>
</comment>
<comment type="activity regulation">
    <text evidence="4">Inhibited by Zn2+.</text>
</comment>
<comment type="subunit">
    <text evidence="4 6">Interacts with SPINK9.</text>
</comment>
<comment type="interaction">
    <interactant intactId="EBI-9057524">
        <id>Q9Y337</id>
    </interactant>
    <interactant intactId="EBI-1058782">
        <id>P20930</id>
        <label>FLG</label>
    </interactant>
    <organismsDiffer>false</organismsDiffer>
    <experiments>4</experiments>
</comment>
<comment type="interaction">
    <interactant intactId="EBI-9057524">
        <id>Q9Y337</id>
    </interactant>
    <interactant intactId="EBI-3867271">
        <id>Q9NQG1</id>
        <label>MANBAL</label>
    </interactant>
    <organismsDiffer>false</organismsDiffer>
    <experiments>3</experiments>
</comment>
<comment type="subcellular location">
    <subcellularLocation>
        <location>Secreted</location>
    </subcellularLocation>
</comment>
<comment type="tissue specificity">
    <text evidence="5">Expressed in skin, breast, brain and testis. Expressed at the stratum granulosum of palmar skin.</text>
</comment>
<comment type="similarity">
    <text evidence="2">Belongs to the peptidase S1 family. Kallikrein subfamily.</text>
</comment>
<comment type="sequence caution" evidence="7">
    <conflict type="erroneous gene model prediction">
        <sequence resource="EMBL-CDS" id="AAG33358"/>
    </conflict>
</comment>
<comment type="sequence caution" evidence="7">
    <conflict type="erroneous initiation">
        <sequence resource="EMBL-CDS" id="AAG33358"/>
    </conflict>
    <text>Truncated N-terminus.</text>
</comment>
<comment type="online information" name="Atlas of Genetics and Cytogenetics in Oncology and Haematology">
    <link uri="https://atlasgeneticsoncology.org/gene/41085/KLK5"/>
</comment>
<sequence>MATARPPWMWVLCALITALLLGVTEHVLANNDVSCDHPSNTVPSGSNQDLGAGAGEDARSDDSSSRIINGSDCDMHTQPWQAALLLRPNQLYCGAVLVHPQWLLTAAHCRKKVFRVRLGHYSLSPVYESGQQMFQGVKSIPHPGYSHPGHSNDLMLIKLNRRIRPTKDVRPINVSSHCPSAGTKCLVSGWGTTKSPQVHFPKVLQCLNISVLSQKRCEDAYPRQIDDTMFCAGDKAGRDSCQGDSGGPVVCNGSLQGLVSWGDYPCARPNRPGVYTNLCKFTKWIQETIQANS</sequence>
<protein>
    <recommendedName>
        <fullName evidence="8">Kallikrein-5</fullName>
        <ecNumber>3.4.21.-</ecNumber>
    </recommendedName>
    <alternativeName>
        <fullName>Kallikrein-like protein 2</fullName>
        <shortName>KLK-L2</shortName>
    </alternativeName>
    <alternativeName>
        <fullName>Stratum corneum tryptic enzyme</fullName>
    </alternativeName>
</protein>
<name>KLK5_HUMAN</name>
<gene>
    <name evidence="8" type="primary">KLK5</name>
    <name evidence="8" type="synonym">SCTE</name>
    <name type="ORF">UNQ570/PRO1132</name>
</gene>
<reference key="1">
    <citation type="journal article" date="1999" name="J. Biol. Chem.">
        <title>Purification, molecular cloning, and expression of a human stratum corneum trypsin-like serine protease with possible function in desquamation.</title>
        <authorList>
            <person name="Brattsand M."/>
            <person name="Egelrud T."/>
        </authorList>
    </citation>
    <scope>NUCLEOTIDE SEQUENCE [MRNA]</scope>
    <source>
        <tissue>Stratum corneum</tissue>
    </source>
</reference>
<reference key="2">
    <citation type="journal article" date="1999" name="Anticancer Res.">
        <title>Identification of novel human kallikrein-like genes on chromosome 19q13.3-q13.4.</title>
        <authorList>
            <person name="Yousef G.M."/>
            <person name="Luo L.-Y."/>
            <person name="Diamandis E.P."/>
        </authorList>
    </citation>
    <scope>NUCLEOTIDE SEQUENCE [GENOMIC DNA]</scope>
</reference>
<reference key="3">
    <citation type="journal article" date="2000" name="Gene">
        <title>Sequencing and expression analysis of the serine protease gene cluster located in chromosome 19q13 region.</title>
        <authorList>
            <person name="Gan L."/>
            <person name="Lee I."/>
            <person name="Smith R."/>
            <person name="Argonza-Barrett R."/>
            <person name="Lei H."/>
            <person name="McCuaig J."/>
            <person name="Moss P."/>
            <person name="Paeper B."/>
            <person name="Wang K."/>
        </authorList>
    </citation>
    <scope>NUCLEOTIDE SEQUENCE [GENOMIC DNA]</scope>
</reference>
<reference key="4">
    <citation type="journal article" date="2004" name="Tumor Biol.">
        <title>Differential expression of a human kallikrein 5 (KLK5) splice variant in ovarian and prostate cancer.</title>
        <authorList>
            <person name="Kurlender L."/>
            <person name="Yousef G.M."/>
            <person name="Memari N."/>
            <person name="Robb J.D."/>
            <person name="Michael I.P."/>
            <person name="Borgono C."/>
            <person name="Katsaros D."/>
            <person name="Stephan C."/>
            <person name="Jung K."/>
            <person name="Diamandis E.P."/>
        </authorList>
    </citation>
    <scope>NUCLEOTIDE SEQUENCE [MRNA]</scope>
</reference>
<reference key="5">
    <citation type="journal article" date="2017" name="Mol. Genet. Metab. Rep.">
        <title>Comparative genomic analysis of eutherian kallikrein genes.</title>
        <authorList>
            <person name="Premzl M."/>
        </authorList>
    </citation>
    <scope>NUCLEOTIDE SEQUENCE [GENOMIC DNA]</scope>
</reference>
<reference key="6">
    <citation type="journal article" date="2003" name="Genome Res.">
        <title>The secreted protein discovery initiative (SPDI), a large-scale effort to identify novel human secreted and transmembrane proteins: a bioinformatics assessment.</title>
        <authorList>
            <person name="Clark H.F."/>
            <person name="Gurney A.L."/>
            <person name="Abaya E."/>
            <person name="Baker K."/>
            <person name="Baldwin D.T."/>
            <person name="Brush J."/>
            <person name="Chen J."/>
            <person name="Chow B."/>
            <person name="Chui C."/>
            <person name="Crowley C."/>
            <person name="Currell B."/>
            <person name="Deuel B."/>
            <person name="Dowd P."/>
            <person name="Eaton D."/>
            <person name="Foster J.S."/>
            <person name="Grimaldi C."/>
            <person name="Gu Q."/>
            <person name="Hass P.E."/>
            <person name="Heldens S."/>
            <person name="Huang A."/>
            <person name="Kim H.S."/>
            <person name="Klimowski L."/>
            <person name="Jin Y."/>
            <person name="Johnson S."/>
            <person name="Lee J."/>
            <person name="Lewis L."/>
            <person name="Liao D."/>
            <person name="Mark M.R."/>
            <person name="Robbie E."/>
            <person name="Sanchez C."/>
            <person name="Schoenfeld J."/>
            <person name="Seshagiri S."/>
            <person name="Simmons L."/>
            <person name="Singh J."/>
            <person name="Smith V."/>
            <person name="Stinson J."/>
            <person name="Vagts A."/>
            <person name="Vandlen R.L."/>
            <person name="Watanabe C."/>
            <person name="Wieand D."/>
            <person name="Woods K."/>
            <person name="Xie M.-H."/>
            <person name="Yansura D.G."/>
            <person name="Yi S."/>
            <person name="Yu G."/>
            <person name="Yuan J."/>
            <person name="Zhang M."/>
            <person name="Zhang Z."/>
            <person name="Goddard A.D."/>
            <person name="Wood W.I."/>
            <person name="Godowski P.J."/>
            <person name="Gray A.M."/>
        </authorList>
    </citation>
    <scope>NUCLEOTIDE SEQUENCE [LARGE SCALE MRNA]</scope>
</reference>
<reference key="7">
    <citation type="submission" date="2003-05" db="EMBL/GenBank/DDBJ databases">
        <title>Cloning of human full-length CDSs in BD Creator(TM) system donor vector.</title>
        <authorList>
            <person name="Kalnine N."/>
            <person name="Chen X."/>
            <person name="Rolfs A."/>
            <person name="Halleck A."/>
            <person name="Hines L."/>
            <person name="Eisenstein S."/>
            <person name="Koundinya M."/>
            <person name="Raphael J."/>
            <person name="Moreira D."/>
            <person name="Kelley T."/>
            <person name="LaBaer J."/>
            <person name="Lin Y."/>
            <person name="Phelan M."/>
            <person name="Farmer A."/>
        </authorList>
    </citation>
    <scope>NUCLEOTIDE SEQUENCE [LARGE SCALE MRNA]</scope>
</reference>
<reference key="8">
    <citation type="journal article" date="2004" name="Nature">
        <title>The DNA sequence and biology of human chromosome 19.</title>
        <authorList>
            <person name="Grimwood J."/>
            <person name="Gordon L.A."/>
            <person name="Olsen A.S."/>
            <person name="Terry A."/>
            <person name="Schmutz J."/>
            <person name="Lamerdin J.E."/>
            <person name="Hellsten U."/>
            <person name="Goodstein D."/>
            <person name="Couronne O."/>
            <person name="Tran-Gyamfi M."/>
            <person name="Aerts A."/>
            <person name="Altherr M."/>
            <person name="Ashworth L."/>
            <person name="Bajorek E."/>
            <person name="Black S."/>
            <person name="Branscomb E."/>
            <person name="Caenepeel S."/>
            <person name="Carrano A.V."/>
            <person name="Caoile C."/>
            <person name="Chan Y.M."/>
            <person name="Christensen M."/>
            <person name="Cleland C.A."/>
            <person name="Copeland A."/>
            <person name="Dalin E."/>
            <person name="Dehal P."/>
            <person name="Denys M."/>
            <person name="Detter J.C."/>
            <person name="Escobar J."/>
            <person name="Flowers D."/>
            <person name="Fotopulos D."/>
            <person name="Garcia C."/>
            <person name="Georgescu A.M."/>
            <person name="Glavina T."/>
            <person name="Gomez M."/>
            <person name="Gonzales E."/>
            <person name="Groza M."/>
            <person name="Hammon N."/>
            <person name="Hawkins T."/>
            <person name="Haydu L."/>
            <person name="Ho I."/>
            <person name="Huang W."/>
            <person name="Israni S."/>
            <person name="Jett J."/>
            <person name="Kadner K."/>
            <person name="Kimball H."/>
            <person name="Kobayashi A."/>
            <person name="Larionov V."/>
            <person name="Leem S.-H."/>
            <person name="Lopez F."/>
            <person name="Lou Y."/>
            <person name="Lowry S."/>
            <person name="Malfatti S."/>
            <person name="Martinez D."/>
            <person name="McCready P.M."/>
            <person name="Medina C."/>
            <person name="Morgan J."/>
            <person name="Nelson K."/>
            <person name="Nolan M."/>
            <person name="Ovcharenko I."/>
            <person name="Pitluck S."/>
            <person name="Pollard M."/>
            <person name="Popkie A.P."/>
            <person name="Predki P."/>
            <person name="Quan G."/>
            <person name="Ramirez L."/>
            <person name="Rash S."/>
            <person name="Retterer J."/>
            <person name="Rodriguez A."/>
            <person name="Rogers S."/>
            <person name="Salamov A."/>
            <person name="Salazar A."/>
            <person name="She X."/>
            <person name="Smith D."/>
            <person name="Slezak T."/>
            <person name="Solovyev V."/>
            <person name="Thayer N."/>
            <person name="Tice H."/>
            <person name="Tsai M."/>
            <person name="Ustaszewska A."/>
            <person name="Vo N."/>
            <person name="Wagner M."/>
            <person name="Wheeler J."/>
            <person name="Wu K."/>
            <person name="Xie G."/>
            <person name="Yang J."/>
            <person name="Dubchak I."/>
            <person name="Furey T.S."/>
            <person name="DeJong P."/>
            <person name="Dickson M."/>
            <person name="Gordon D."/>
            <person name="Eichler E.E."/>
            <person name="Pennacchio L.A."/>
            <person name="Richardson P."/>
            <person name="Stubbs L."/>
            <person name="Rokhsar D.S."/>
            <person name="Myers R.M."/>
            <person name="Rubin E.M."/>
            <person name="Lucas S.M."/>
        </authorList>
    </citation>
    <scope>NUCLEOTIDE SEQUENCE [LARGE SCALE GENOMIC DNA]</scope>
</reference>
<reference key="9">
    <citation type="submission" date="2005-07" db="EMBL/GenBank/DDBJ databases">
        <authorList>
            <person name="Mural R.J."/>
            <person name="Istrail S."/>
            <person name="Sutton G."/>
            <person name="Florea L."/>
            <person name="Halpern A.L."/>
            <person name="Mobarry C.M."/>
            <person name="Lippert R."/>
            <person name="Walenz B."/>
            <person name="Shatkay H."/>
            <person name="Dew I."/>
            <person name="Miller J.R."/>
            <person name="Flanigan M.J."/>
            <person name="Edwards N.J."/>
            <person name="Bolanos R."/>
            <person name="Fasulo D."/>
            <person name="Halldorsson B.V."/>
            <person name="Hannenhalli S."/>
            <person name="Turner R."/>
            <person name="Yooseph S."/>
            <person name="Lu F."/>
            <person name="Nusskern D.R."/>
            <person name="Shue B.C."/>
            <person name="Zheng X.H."/>
            <person name="Zhong F."/>
            <person name="Delcher A.L."/>
            <person name="Huson D.H."/>
            <person name="Kravitz S.A."/>
            <person name="Mouchard L."/>
            <person name="Reinert K."/>
            <person name="Remington K.A."/>
            <person name="Clark A.G."/>
            <person name="Waterman M.S."/>
            <person name="Eichler E.E."/>
            <person name="Adams M.D."/>
            <person name="Hunkapiller M.W."/>
            <person name="Myers E.W."/>
            <person name="Venter J.C."/>
        </authorList>
    </citation>
    <scope>NUCLEOTIDE SEQUENCE [LARGE SCALE GENOMIC DNA]</scope>
</reference>
<reference key="10">
    <citation type="journal article" date="2004" name="Genome Res.">
        <title>The status, quality, and expansion of the NIH full-length cDNA project: the Mammalian Gene Collection (MGC).</title>
        <authorList>
            <consortium name="The MGC Project Team"/>
        </authorList>
    </citation>
    <scope>NUCLEOTIDE SEQUENCE [LARGE SCALE MRNA]</scope>
    <source>
        <tissue>Ovary</tissue>
    </source>
</reference>
<reference key="11">
    <citation type="journal article" date="2009" name="J. Invest. Dermatol.">
        <title>SPINK9: a selective, skin-specific Kazal-type serine protease inhibitor.</title>
        <authorList>
            <person name="Brattsand M."/>
            <person name="Stefansson K."/>
            <person name="Hubiche T."/>
            <person name="Nilsson S.K."/>
            <person name="Egelrud T."/>
        </authorList>
    </citation>
    <scope>INTERACTION WITH SPINK9</scope>
</reference>
<reference key="12">
    <citation type="journal article" date="2009" name="PLoS ONE">
        <title>Identification of lympho-epithelial Kazal-type inhibitor 2 in human skin as a kallikrein-related peptidase 5-specific protease inhibitor.</title>
        <authorList>
            <person name="Meyer-Hoffert U."/>
            <person name="Wu Z."/>
            <person name="Schroeder J.M."/>
        </authorList>
    </citation>
    <scope>TISSUE SPECIFICITY</scope>
</reference>
<reference key="13">
    <citation type="journal article" date="2007" name="J. Mol. Biol.">
        <title>Structural basis of the zinc inhibition of human tissue kallikrein 5.</title>
        <authorList>
            <person name="Debela M."/>
            <person name="Goettig P."/>
            <person name="Magdolen V."/>
            <person name="Huber R."/>
            <person name="Schechter N.M."/>
            <person name="Bode W."/>
        </authorList>
    </citation>
    <scope>X-RAY CRYSTALLOGRAPHY (2.3 ANGSTROMS) OF 67-293 ALONE AND IN COMPLEX WITH ZINC</scope>
    <scope>ACTIVITY REGULATION</scope>
    <scope>ACTIVE SITE</scope>
    <scope>GLYCOSYLATION AT ASN-208</scope>
    <scope>DISULFIDE BONDS</scope>
</reference>
<keyword id="KW-0002">3D-structure</keyword>
<keyword id="KW-1015">Disulfide bond</keyword>
<keyword id="KW-0325">Glycoprotein</keyword>
<keyword id="KW-0378">Hydrolase</keyword>
<keyword id="KW-0645">Protease</keyword>
<keyword id="KW-1267">Proteomics identification</keyword>
<keyword id="KW-1185">Reference proteome</keyword>
<keyword id="KW-0964">Secreted</keyword>
<keyword id="KW-0720">Serine protease</keyword>
<keyword id="KW-0732">Signal</keyword>
<evidence type="ECO:0000255" key="1"/>
<evidence type="ECO:0000255" key="2">
    <source>
        <dbReference type="PROSITE-ProRule" id="PRU00274"/>
    </source>
</evidence>
<evidence type="ECO:0000256" key="3">
    <source>
        <dbReference type="SAM" id="MobiDB-lite"/>
    </source>
</evidence>
<evidence type="ECO:0000269" key="4">
    <source>
    </source>
</evidence>
<evidence type="ECO:0000269" key="5">
    <source>
    </source>
</evidence>
<evidence type="ECO:0000269" key="6">
    <source>
    </source>
</evidence>
<evidence type="ECO:0000305" key="7"/>
<evidence type="ECO:0000312" key="8">
    <source>
        <dbReference type="HGNC" id="HGNC:6366"/>
    </source>
</evidence>
<evidence type="ECO:0007829" key="9">
    <source>
        <dbReference type="PDB" id="2PSX"/>
    </source>
</evidence>
<evidence type="ECO:0007829" key="10">
    <source>
        <dbReference type="PDB" id="6QFE"/>
    </source>
</evidence>
<dbReference type="EC" id="3.4.21.-"/>
<dbReference type="EMBL" id="AF168768">
    <property type="protein sequence ID" value="AAF03101.1"/>
    <property type="molecule type" value="mRNA"/>
</dbReference>
<dbReference type="EMBL" id="AF135028">
    <property type="protein sequence ID" value="AAD26429.1"/>
    <property type="molecule type" value="Genomic_DNA"/>
</dbReference>
<dbReference type="EMBL" id="AF243527">
    <property type="protein sequence ID" value="AAG33358.1"/>
    <property type="status" value="ALT_SEQ"/>
    <property type="molecule type" value="Genomic_DNA"/>
</dbReference>
<dbReference type="EMBL" id="AY279380">
    <property type="protein sequence ID" value="AAP42275.1"/>
    <property type="molecule type" value="mRNA"/>
</dbReference>
<dbReference type="EMBL" id="AY279381">
    <property type="protein sequence ID" value="AAP42276.1"/>
    <property type="molecule type" value="mRNA"/>
</dbReference>
<dbReference type="EMBL" id="LT631554">
    <property type="protein sequence ID" value="SFW93201.1"/>
    <property type="molecule type" value="Genomic_DNA"/>
</dbReference>
<dbReference type="EMBL" id="AY359010">
    <property type="protein sequence ID" value="AAQ89369.1"/>
    <property type="molecule type" value="mRNA"/>
</dbReference>
<dbReference type="EMBL" id="BT006867">
    <property type="protein sequence ID" value="AAP35513.1"/>
    <property type="molecule type" value="mRNA"/>
</dbReference>
<dbReference type="EMBL" id="AC011483">
    <property type="status" value="NOT_ANNOTATED_CDS"/>
    <property type="molecule type" value="Genomic_DNA"/>
</dbReference>
<dbReference type="EMBL" id="CH471135">
    <property type="protein sequence ID" value="EAW71946.1"/>
    <property type="molecule type" value="Genomic_DNA"/>
</dbReference>
<dbReference type="EMBL" id="CH471135">
    <property type="protein sequence ID" value="EAW71948.1"/>
    <property type="molecule type" value="Genomic_DNA"/>
</dbReference>
<dbReference type="EMBL" id="CH471135">
    <property type="protein sequence ID" value="EAW71949.1"/>
    <property type="molecule type" value="Genomic_DNA"/>
</dbReference>
<dbReference type="EMBL" id="CH471135">
    <property type="protein sequence ID" value="EAW71950.1"/>
    <property type="molecule type" value="Genomic_DNA"/>
</dbReference>
<dbReference type="EMBL" id="CH471135">
    <property type="protein sequence ID" value="EAW71952.1"/>
    <property type="molecule type" value="Genomic_DNA"/>
</dbReference>
<dbReference type="EMBL" id="BC008036">
    <property type="protein sequence ID" value="AAH08036.1"/>
    <property type="molecule type" value="mRNA"/>
</dbReference>
<dbReference type="CCDS" id="CCDS12810.1"/>
<dbReference type="RefSeq" id="NP_001070959.1">
    <property type="nucleotide sequence ID" value="NM_001077491.2"/>
</dbReference>
<dbReference type="RefSeq" id="NP_001070960.1">
    <property type="nucleotide sequence ID" value="NM_001077492.2"/>
</dbReference>
<dbReference type="RefSeq" id="NP_036559.1">
    <property type="nucleotide sequence ID" value="NM_012427.5"/>
</dbReference>
<dbReference type="RefSeq" id="XP_011525004.1">
    <property type="nucleotide sequence ID" value="XM_011526702.2"/>
</dbReference>
<dbReference type="RefSeq" id="XP_011525005.1">
    <property type="nucleotide sequence ID" value="XM_011526703.3"/>
</dbReference>
<dbReference type="RefSeq" id="XP_054176447.1">
    <property type="nucleotide sequence ID" value="XM_054320472.1"/>
</dbReference>
<dbReference type="RefSeq" id="XP_054176448.1">
    <property type="nucleotide sequence ID" value="XM_054320473.1"/>
</dbReference>
<dbReference type="PDB" id="2PSX">
    <property type="method" value="X-ray"/>
    <property type="resolution" value="2.30 A"/>
    <property type="chains" value="A=67-293"/>
</dbReference>
<dbReference type="PDB" id="2PSY">
    <property type="method" value="X-ray"/>
    <property type="resolution" value="2.30 A"/>
    <property type="chains" value="A=67-293"/>
</dbReference>
<dbReference type="PDB" id="6QFE">
    <property type="method" value="X-ray"/>
    <property type="resolution" value="1.67 A"/>
    <property type="chains" value="A/B=67-293"/>
</dbReference>
<dbReference type="PDB" id="7U5B">
    <property type="method" value="X-ray"/>
    <property type="resolution" value="2.37 A"/>
    <property type="chains" value="I/J=67-293"/>
</dbReference>
<dbReference type="PDBsum" id="2PSX"/>
<dbReference type="PDBsum" id="2PSY"/>
<dbReference type="PDBsum" id="6QFE"/>
<dbReference type="PDBsum" id="7U5B"/>
<dbReference type="SMR" id="Q9Y337"/>
<dbReference type="BioGRID" id="117346">
    <property type="interactions" value="128"/>
</dbReference>
<dbReference type="FunCoup" id="Q9Y337">
    <property type="interactions" value="168"/>
</dbReference>
<dbReference type="IntAct" id="Q9Y337">
    <property type="interactions" value="101"/>
</dbReference>
<dbReference type="MINT" id="Q9Y337"/>
<dbReference type="STRING" id="9606.ENSP00000337733"/>
<dbReference type="BindingDB" id="Q9Y337"/>
<dbReference type="ChEMBL" id="CHEMBL4447"/>
<dbReference type="GuidetoPHARMACOLOGY" id="2375"/>
<dbReference type="MEROPS" id="S01.017"/>
<dbReference type="GlyConnect" id="1428">
    <property type="glycosylation" value="1 N-Linked glycan (1 site)"/>
</dbReference>
<dbReference type="GlyCosmos" id="Q9Y337">
    <property type="glycosylation" value="4 sites, 1 glycan"/>
</dbReference>
<dbReference type="GlyGen" id="Q9Y337">
    <property type="glycosylation" value="5 sites, 2 N-linked glycans (2 sites), 1 O-linked glycan (1 site)"/>
</dbReference>
<dbReference type="iPTMnet" id="Q9Y337"/>
<dbReference type="PhosphoSitePlus" id="Q9Y337"/>
<dbReference type="BioMuta" id="KLK5"/>
<dbReference type="DMDM" id="296434569"/>
<dbReference type="jPOST" id="Q9Y337"/>
<dbReference type="MassIVE" id="Q9Y337"/>
<dbReference type="PaxDb" id="9606-ENSP00000337733"/>
<dbReference type="PeptideAtlas" id="Q9Y337"/>
<dbReference type="ProteomicsDB" id="85971"/>
<dbReference type="Pumba" id="Q9Y337"/>
<dbReference type="Antibodypedia" id="2601">
    <property type="antibodies" value="399 antibodies from 40 providers"/>
</dbReference>
<dbReference type="DNASU" id="25818"/>
<dbReference type="Ensembl" id="ENST00000336334.8">
    <property type="protein sequence ID" value="ENSP00000337733.2"/>
    <property type="gene ID" value="ENSG00000167754.13"/>
</dbReference>
<dbReference type="Ensembl" id="ENST00000391809.6">
    <property type="protein sequence ID" value="ENSP00000375685.1"/>
    <property type="gene ID" value="ENSG00000167754.13"/>
</dbReference>
<dbReference type="Ensembl" id="ENST00000593428.5">
    <property type="protein sequence ID" value="ENSP00000471966.1"/>
    <property type="gene ID" value="ENSG00000167754.13"/>
</dbReference>
<dbReference type="GeneID" id="25818"/>
<dbReference type="KEGG" id="hsa:25818"/>
<dbReference type="MANE-Select" id="ENST00000336334.8">
    <property type="protein sequence ID" value="ENSP00000337733.2"/>
    <property type="RefSeq nucleotide sequence ID" value="NM_012427.5"/>
    <property type="RefSeq protein sequence ID" value="NP_036559.1"/>
</dbReference>
<dbReference type="UCSC" id="uc002pue.4">
    <property type="organism name" value="human"/>
</dbReference>
<dbReference type="AGR" id="HGNC:6366"/>
<dbReference type="CTD" id="25818"/>
<dbReference type="DisGeNET" id="25818"/>
<dbReference type="GeneCards" id="KLK5"/>
<dbReference type="HGNC" id="HGNC:6366">
    <property type="gene designation" value="KLK5"/>
</dbReference>
<dbReference type="HPA" id="ENSG00000167754">
    <property type="expression patterns" value="Tissue enriched (skin)"/>
</dbReference>
<dbReference type="MIM" id="605643">
    <property type="type" value="gene"/>
</dbReference>
<dbReference type="neXtProt" id="NX_Q9Y337"/>
<dbReference type="OpenTargets" id="ENSG00000167754"/>
<dbReference type="PharmGKB" id="PA30155"/>
<dbReference type="VEuPathDB" id="HostDB:ENSG00000167754"/>
<dbReference type="eggNOG" id="KOG3627">
    <property type="taxonomic scope" value="Eukaryota"/>
</dbReference>
<dbReference type="GeneTree" id="ENSGT01020000230389"/>
<dbReference type="HOGENOM" id="CLU_006842_1_1_1"/>
<dbReference type="InParanoid" id="Q9Y337"/>
<dbReference type="OMA" id="HCRKPVY"/>
<dbReference type="OrthoDB" id="10059102at2759"/>
<dbReference type="PAN-GO" id="Q9Y337">
    <property type="GO annotations" value="4 GO annotations based on evolutionary models"/>
</dbReference>
<dbReference type="PhylomeDB" id="Q9Y337"/>
<dbReference type="TreeFam" id="TF331065"/>
<dbReference type="BRENDA" id="3.4.21.B39">
    <property type="organism ID" value="2681"/>
</dbReference>
<dbReference type="PathwayCommons" id="Q9Y337"/>
<dbReference type="Reactome" id="R-HSA-6809371">
    <property type="pathway name" value="Formation of the cornified envelope"/>
</dbReference>
<dbReference type="Reactome" id="R-HSA-9725554">
    <property type="pathway name" value="Differentiation of Keratinocytes in Interfollicular Epidermis in Mammalian Skin"/>
</dbReference>
<dbReference type="SignaLink" id="Q9Y337"/>
<dbReference type="BioGRID-ORCS" id="25818">
    <property type="hits" value="8 hits in 1146 CRISPR screens"/>
</dbReference>
<dbReference type="ChiTaRS" id="KLK5">
    <property type="organism name" value="human"/>
</dbReference>
<dbReference type="EvolutionaryTrace" id="Q9Y337"/>
<dbReference type="GeneWiki" id="KLK5"/>
<dbReference type="GenomeRNAi" id="25818"/>
<dbReference type="Pharos" id="Q9Y337">
    <property type="development level" value="Tchem"/>
</dbReference>
<dbReference type="PRO" id="PR:Q9Y337"/>
<dbReference type="Proteomes" id="UP000005640">
    <property type="component" value="Chromosome 19"/>
</dbReference>
<dbReference type="RNAct" id="Q9Y337">
    <property type="molecule type" value="protein"/>
</dbReference>
<dbReference type="Bgee" id="ENSG00000167754">
    <property type="expression patterns" value="Expressed in upper arm skin and 97 other cell types or tissues"/>
</dbReference>
<dbReference type="ExpressionAtlas" id="Q9Y337">
    <property type="expression patterns" value="baseline and differential"/>
</dbReference>
<dbReference type="GO" id="GO:0005829">
    <property type="term" value="C:cytosol"/>
    <property type="evidence" value="ECO:0000304"/>
    <property type="project" value="Reactome"/>
</dbReference>
<dbReference type="GO" id="GO:0097209">
    <property type="term" value="C:epidermal lamellar body"/>
    <property type="evidence" value="ECO:0000314"/>
    <property type="project" value="UniProtKB"/>
</dbReference>
<dbReference type="GO" id="GO:0005576">
    <property type="term" value="C:extracellular region"/>
    <property type="evidence" value="ECO:0000304"/>
    <property type="project" value="Reactome"/>
</dbReference>
<dbReference type="GO" id="GO:0005615">
    <property type="term" value="C:extracellular space"/>
    <property type="evidence" value="ECO:0000315"/>
    <property type="project" value="UniProtKB"/>
</dbReference>
<dbReference type="GO" id="GO:0030141">
    <property type="term" value="C:secretory granule"/>
    <property type="evidence" value="ECO:0000318"/>
    <property type="project" value="GO_Central"/>
</dbReference>
<dbReference type="GO" id="GO:0008233">
    <property type="term" value="F:peptidase activity"/>
    <property type="evidence" value="ECO:0000315"/>
    <property type="project" value="UniProtKB"/>
</dbReference>
<dbReference type="GO" id="GO:0004252">
    <property type="term" value="F:serine-type endopeptidase activity"/>
    <property type="evidence" value="ECO:0000314"/>
    <property type="project" value="UniProtKB"/>
</dbReference>
<dbReference type="GO" id="GO:0008236">
    <property type="term" value="F:serine-type peptidase activity"/>
    <property type="evidence" value="ECO:0000304"/>
    <property type="project" value="ProtInc"/>
</dbReference>
<dbReference type="GO" id="GO:0097186">
    <property type="term" value="P:amelogenesis"/>
    <property type="evidence" value="ECO:0000318"/>
    <property type="project" value="GO_Central"/>
</dbReference>
<dbReference type="GO" id="GO:0070268">
    <property type="term" value="P:cornification"/>
    <property type="evidence" value="ECO:0000304"/>
    <property type="project" value="Reactome"/>
</dbReference>
<dbReference type="GO" id="GO:0008544">
    <property type="term" value="P:epidermis development"/>
    <property type="evidence" value="ECO:0000304"/>
    <property type="project" value="ProtInc"/>
</dbReference>
<dbReference type="GO" id="GO:0022617">
    <property type="term" value="P:extracellular matrix disassembly"/>
    <property type="evidence" value="ECO:0000318"/>
    <property type="project" value="GO_Central"/>
</dbReference>
<dbReference type="GO" id="GO:0002803">
    <property type="term" value="P:positive regulation of antibacterial peptide production"/>
    <property type="evidence" value="ECO:0000315"/>
    <property type="project" value="UniProtKB"/>
</dbReference>
<dbReference type="GO" id="GO:0045745">
    <property type="term" value="P:positive regulation of G protein-coupled receptor signaling pathway"/>
    <property type="evidence" value="ECO:0000314"/>
    <property type="project" value="UniProtKB"/>
</dbReference>
<dbReference type="GO" id="GO:0051604">
    <property type="term" value="P:protein maturation"/>
    <property type="evidence" value="ECO:0000318"/>
    <property type="project" value="GO_Central"/>
</dbReference>
<dbReference type="GO" id="GO:0006508">
    <property type="term" value="P:proteolysis"/>
    <property type="evidence" value="ECO:0007669"/>
    <property type="project" value="UniProtKB-KW"/>
</dbReference>
<dbReference type="CDD" id="cd00190">
    <property type="entry name" value="Tryp_SPc"/>
    <property type="match status" value="1"/>
</dbReference>
<dbReference type="FunFam" id="2.40.10.10:FF:000021">
    <property type="entry name" value="Kallikrein 1"/>
    <property type="match status" value="1"/>
</dbReference>
<dbReference type="FunFam" id="2.40.10.10:FF:000010">
    <property type="entry name" value="Kallikrein related peptidase 11"/>
    <property type="match status" value="1"/>
</dbReference>
<dbReference type="Gene3D" id="2.40.10.10">
    <property type="entry name" value="Trypsin-like serine proteases"/>
    <property type="match status" value="2"/>
</dbReference>
<dbReference type="InterPro" id="IPR009003">
    <property type="entry name" value="Peptidase_S1_PA"/>
</dbReference>
<dbReference type="InterPro" id="IPR043504">
    <property type="entry name" value="Peptidase_S1_PA_chymotrypsin"/>
</dbReference>
<dbReference type="InterPro" id="IPR001314">
    <property type="entry name" value="Peptidase_S1A"/>
</dbReference>
<dbReference type="InterPro" id="IPR001254">
    <property type="entry name" value="Trypsin_dom"/>
</dbReference>
<dbReference type="InterPro" id="IPR018114">
    <property type="entry name" value="TRYPSIN_HIS"/>
</dbReference>
<dbReference type="InterPro" id="IPR033116">
    <property type="entry name" value="TRYPSIN_SER"/>
</dbReference>
<dbReference type="PANTHER" id="PTHR24271:SF59">
    <property type="entry name" value="KALLIKREIN-5"/>
    <property type="match status" value="1"/>
</dbReference>
<dbReference type="PANTHER" id="PTHR24271">
    <property type="entry name" value="KALLIKREIN-RELATED"/>
    <property type="match status" value="1"/>
</dbReference>
<dbReference type="Pfam" id="PF00089">
    <property type="entry name" value="Trypsin"/>
    <property type="match status" value="1"/>
</dbReference>
<dbReference type="PRINTS" id="PR00722">
    <property type="entry name" value="CHYMOTRYPSIN"/>
</dbReference>
<dbReference type="SMART" id="SM00020">
    <property type="entry name" value="Tryp_SPc"/>
    <property type="match status" value="1"/>
</dbReference>
<dbReference type="SUPFAM" id="SSF50494">
    <property type="entry name" value="Trypsin-like serine proteases"/>
    <property type="match status" value="1"/>
</dbReference>
<dbReference type="PROSITE" id="PS50240">
    <property type="entry name" value="TRYPSIN_DOM"/>
    <property type="match status" value="1"/>
</dbReference>
<dbReference type="PROSITE" id="PS00134">
    <property type="entry name" value="TRYPSIN_HIS"/>
    <property type="match status" value="1"/>
</dbReference>
<dbReference type="PROSITE" id="PS00135">
    <property type="entry name" value="TRYPSIN_SER"/>
    <property type="match status" value="1"/>
</dbReference>
<accession>Q9Y337</accession>
<accession>A0A024R4G4</accession>
<accession>Q53ZR3</accession>
<accession>Q9HBG8</accession>